<feature type="chain" id="PRO_1000063796" description="3-isopropylmalate dehydratase small subunit">
    <location>
        <begin position="1"/>
        <end position="212"/>
    </location>
</feature>
<gene>
    <name evidence="1" type="primary">leuD</name>
    <name type="ordered locus">Neut_1146</name>
</gene>
<sequence length="212" mass="24427">MKKFEQLRGIVAPLDRANIDTDAIIPKQFLKSIKRSGFGQNLFDEWRYLDYGEPGKDAASRQLNPDFILNQSRYQGAKILVTRDNFGCGSSREHAPWALQDYGFAVIIAPSFADIFYNNCFKIGLLPIVLESPVVDRLIRDALTVDGYQLEINLEAQTVMALSGETYWFEVDHFRKHCLLNGLDEIGLTLQHADRIRKFEINRRNEQPWLFL</sequence>
<accession>Q0AGY1</accession>
<name>LEUD_NITEC</name>
<comment type="function">
    <text evidence="1">Catalyzes the isomerization between 2-isopropylmalate and 3-isopropylmalate, via the formation of 2-isopropylmaleate.</text>
</comment>
<comment type="catalytic activity">
    <reaction evidence="1">
        <text>(2R,3S)-3-isopropylmalate = (2S)-2-isopropylmalate</text>
        <dbReference type="Rhea" id="RHEA:32287"/>
        <dbReference type="ChEBI" id="CHEBI:1178"/>
        <dbReference type="ChEBI" id="CHEBI:35121"/>
        <dbReference type="EC" id="4.2.1.33"/>
    </reaction>
</comment>
<comment type="pathway">
    <text evidence="1">Amino-acid biosynthesis; L-leucine biosynthesis; L-leucine from 3-methyl-2-oxobutanoate: step 2/4.</text>
</comment>
<comment type="subunit">
    <text evidence="1">Heterodimer of LeuC and LeuD.</text>
</comment>
<comment type="similarity">
    <text evidence="1">Belongs to the LeuD family. LeuD type 1 subfamily.</text>
</comment>
<dbReference type="EC" id="4.2.1.33" evidence="1"/>
<dbReference type="EMBL" id="CP000450">
    <property type="protein sequence ID" value="ABI59401.1"/>
    <property type="molecule type" value="Genomic_DNA"/>
</dbReference>
<dbReference type="RefSeq" id="WP_011634221.1">
    <property type="nucleotide sequence ID" value="NC_008344.1"/>
</dbReference>
<dbReference type="SMR" id="Q0AGY1"/>
<dbReference type="STRING" id="335283.Neut_1146"/>
<dbReference type="KEGG" id="net:Neut_1146"/>
<dbReference type="eggNOG" id="COG0066">
    <property type="taxonomic scope" value="Bacteria"/>
</dbReference>
<dbReference type="HOGENOM" id="CLU_081378_0_3_4"/>
<dbReference type="OrthoDB" id="9777465at2"/>
<dbReference type="UniPathway" id="UPA00048">
    <property type="reaction ID" value="UER00071"/>
</dbReference>
<dbReference type="Proteomes" id="UP000001966">
    <property type="component" value="Chromosome"/>
</dbReference>
<dbReference type="GO" id="GO:0009316">
    <property type="term" value="C:3-isopropylmalate dehydratase complex"/>
    <property type="evidence" value="ECO:0007669"/>
    <property type="project" value="InterPro"/>
</dbReference>
<dbReference type="GO" id="GO:0003861">
    <property type="term" value="F:3-isopropylmalate dehydratase activity"/>
    <property type="evidence" value="ECO:0007669"/>
    <property type="project" value="UniProtKB-UniRule"/>
</dbReference>
<dbReference type="GO" id="GO:0009098">
    <property type="term" value="P:L-leucine biosynthetic process"/>
    <property type="evidence" value="ECO:0007669"/>
    <property type="project" value="UniProtKB-UniRule"/>
</dbReference>
<dbReference type="CDD" id="cd01577">
    <property type="entry name" value="IPMI_Swivel"/>
    <property type="match status" value="1"/>
</dbReference>
<dbReference type="FunFam" id="3.20.19.10:FF:000003">
    <property type="entry name" value="3-isopropylmalate dehydratase small subunit"/>
    <property type="match status" value="1"/>
</dbReference>
<dbReference type="Gene3D" id="3.20.19.10">
    <property type="entry name" value="Aconitase, domain 4"/>
    <property type="match status" value="1"/>
</dbReference>
<dbReference type="HAMAP" id="MF_01031">
    <property type="entry name" value="LeuD_type1"/>
    <property type="match status" value="1"/>
</dbReference>
<dbReference type="InterPro" id="IPR004431">
    <property type="entry name" value="3-IsopropMal_deHydase_ssu"/>
</dbReference>
<dbReference type="InterPro" id="IPR015928">
    <property type="entry name" value="Aconitase/3IPM_dehydase_swvl"/>
</dbReference>
<dbReference type="InterPro" id="IPR000573">
    <property type="entry name" value="AconitaseA/IPMdHydase_ssu_swvl"/>
</dbReference>
<dbReference type="InterPro" id="IPR033940">
    <property type="entry name" value="IPMI_Swivel"/>
</dbReference>
<dbReference type="InterPro" id="IPR050075">
    <property type="entry name" value="LeuD"/>
</dbReference>
<dbReference type="NCBIfam" id="TIGR00171">
    <property type="entry name" value="leuD"/>
    <property type="match status" value="1"/>
</dbReference>
<dbReference type="NCBIfam" id="NF002458">
    <property type="entry name" value="PRK01641.1"/>
    <property type="match status" value="1"/>
</dbReference>
<dbReference type="PANTHER" id="PTHR43345:SF5">
    <property type="entry name" value="3-ISOPROPYLMALATE DEHYDRATASE SMALL SUBUNIT"/>
    <property type="match status" value="1"/>
</dbReference>
<dbReference type="PANTHER" id="PTHR43345">
    <property type="entry name" value="3-ISOPROPYLMALATE DEHYDRATASE SMALL SUBUNIT 2-RELATED-RELATED"/>
    <property type="match status" value="1"/>
</dbReference>
<dbReference type="Pfam" id="PF00694">
    <property type="entry name" value="Aconitase_C"/>
    <property type="match status" value="1"/>
</dbReference>
<dbReference type="SUPFAM" id="SSF52016">
    <property type="entry name" value="LeuD/IlvD-like"/>
    <property type="match status" value="1"/>
</dbReference>
<proteinExistence type="inferred from homology"/>
<evidence type="ECO:0000255" key="1">
    <source>
        <dbReference type="HAMAP-Rule" id="MF_01031"/>
    </source>
</evidence>
<organism>
    <name type="scientific">Nitrosomonas eutropha (strain DSM 101675 / C91 / Nm57)</name>
    <dbReference type="NCBI Taxonomy" id="335283"/>
    <lineage>
        <taxon>Bacteria</taxon>
        <taxon>Pseudomonadati</taxon>
        <taxon>Pseudomonadota</taxon>
        <taxon>Betaproteobacteria</taxon>
        <taxon>Nitrosomonadales</taxon>
        <taxon>Nitrosomonadaceae</taxon>
        <taxon>Nitrosomonas</taxon>
    </lineage>
</organism>
<keyword id="KW-0028">Amino-acid biosynthesis</keyword>
<keyword id="KW-0100">Branched-chain amino acid biosynthesis</keyword>
<keyword id="KW-0432">Leucine biosynthesis</keyword>
<keyword id="KW-0456">Lyase</keyword>
<protein>
    <recommendedName>
        <fullName evidence="1">3-isopropylmalate dehydratase small subunit</fullName>
        <ecNumber evidence="1">4.2.1.33</ecNumber>
    </recommendedName>
    <alternativeName>
        <fullName evidence="1">Alpha-IPM isomerase</fullName>
        <shortName evidence="1">IPMI</shortName>
    </alternativeName>
    <alternativeName>
        <fullName evidence="1">Isopropylmalate isomerase</fullName>
    </alternativeName>
</protein>
<reference key="1">
    <citation type="journal article" date="2007" name="Environ. Microbiol.">
        <title>Whole-genome analysis of the ammonia-oxidizing bacterium, Nitrosomonas eutropha C91: implications for niche adaptation.</title>
        <authorList>
            <person name="Stein L.Y."/>
            <person name="Arp D.J."/>
            <person name="Berube P.M."/>
            <person name="Chain P.S."/>
            <person name="Hauser L."/>
            <person name="Jetten M.S."/>
            <person name="Klotz M.G."/>
            <person name="Larimer F.W."/>
            <person name="Norton J.M."/>
            <person name="Op den Camp H.J.M."/>
            <person name="Shin M."/>
            <person name="Wei X."/>
        </authorList>
    </citation>
    <scope>NUCLEOTIDE SEQUENCE [LARGE SCALE GENOMIC DNA]</scope>
    <source>
        <strain>DSM 101675 / C91 / Nm57</strain>
    </source>
</reference>